<sequence length="259" mass="27222">MSTAIIVVGANGRMGKTISHLAATESAFSLAGLVDSREHVESLAGASCPVGDSLAAVLPKAPGAVAIDFTAPSVSLQSARAVAASGHALVIGTTGFTDAEKDELHELAKKAPIFWASNMSIGVNVLCKILPELTRALGDAYDIEMVELHHNRKKDSPSGTALTLGECLAEARGWQLNDVRCSARDGIIGERPKAQIGIQAIRGGDVVGVHTVYFMGPGERIEVTHQAHSRDTFAQGALRAAAWLVGQKPGKLYGMRDMF</sequence>
<organism>
    <name type="scientific">Desulfovibrio desulfuricans (strain ATCC 27774 / DSM 6949 / MB)</name>
    <dbReference type="NCBI Taxonomy" id="525146"/>
    <lineage>
        <taxon>Bacteria</taxon>
        <taxon>Pseudomonadati</taxon>
        <taxon>Thermodesulfobacteriota</taxon>
        <taxon>Desulfovibrionia</taxon>
        <taxon>Desulfovibrionales</taxon>
        <taxon>Desulfovibrionaceae</taxon>
        <taxon>Desulfovibrio</taxon>
    </lineage>
</organism>
<dbReference type="EC" id="1.17.1.8" evidence="1"/>
<dbReference type="EMBL" id="CP001358">
    <property type="protein sequence ID" value="ACL49326.1"/>
    <property type="molecule type" value="Genomic_DNA"/>
</dbReference>
<dbReference type="SMR" id="B8J0P9"/>
<dbReference type="STRING" id="525146.Ddes_1424"/>
<dbReference type="KEGG" id="dds:Ddes_1424"/>
<dbReference type="eggNOG" id="COG0289">
    <property type="taxonomic scope" value="Bacteria"/>
</dbReference>
<dbReference type="HOGENOM" id="CLU_047479_2_1_7"/>
<dbReference type="UniPathway" id="UPA00034">
    <property type="reaction ID" value="UER00018"/>
</dbReference>
<dbReference type="GO" id="GO:0005829">
    <property type="term" value="C:cytosol"/>
    <property type="evidence" value="ECO:0007669"/>
    <property type="project" value="TreeGrafter"/>
</dbReference>
<dbReference type="GO" id="GO:0008839">
    <property type="term" value="F:4-hydroxy-tetrahydrodipicolinate reductase"/>
    <property type="evidence" value="ECO:0007669"/>
    <property type="project" value="UniProtKB-EC"/>
</dbReference>
<dbReference type="GO" id="GO:0051287">
    <property type="term" value="F:NAD binding"/>
    <property type="evidence" value="ECO:0007669"/>
    <property type="project" value="UniProtKB-UniRule"/>
</dbReference>
<dbReference type="GO" id="GO:0050661">
    <property type="term" value="F:NADP binding"/>
    <property type="evidence" value="ECO:0007669"/>
    <property type="project" value="UniProtKB-UniRule"/>
</dbReference>
<dbReference type="GO" id="GO:0016726">
    <property type="term" value="F:oxidoreductase activity, acting on CH or CH2 groups, NAD or NADP as acceptor"/>
    <property type="evidence" value="ECO:0007669"/>
    <property type="project" value="UniProtKB-UniRule"/>
</dbReference>
<dbReference type="GO" id="GO:0019877">
    <property type="term" value="P:diaminopimelate biosynthetic process"/>
    <property type="evidence" value="ECO:0007669"/>
    <property type="project" value="UniProtKB-UniRule"/>
</dbReference>
<dbReference type="GO" id="GO:0009089">
    <property type="term" value="P:lysine biosynthetic process via diaminopimelate"/>
    <property type="evidence" value="ECO:0007669"/>
    <property type="project" value="UniProtKB-UniRule"/>
</dbReference>
<dbReference type="CDD" id="cd02274">
    <property type="entry name" value="DHDPR_N"/>
    <property type="match status" value="1"/>
</dbReference>
<dbReference type="FunFam" id="3.30.360.10:FF:000004">
    <property type="entry name" value="4-hydroxy-tetrahydrodipicolinate reductase"/>
    <property type="match status" value="1"/>
</dbReference>
<dbReference type="Gene3D" id="3.30.360.10">
    <property type="entry name" value="Dihydrodipicolinate Reductase, domain 2"/>
    <property type="match status" value="1"/>
</dbReference>
<dbReference type="Gene3D" id="3.40.50.720">
    <property type="entry name" value="NAD(P)-binding Rossmann-like Domain"/>
    <property type="match status" value="1"/>
</dbReference>
<dbReference type="HAMAP" id="MF_00102">
    <property type="entry name" value="DapB"/>
    <property type="match status" value="1"/>
</dbReference>
<dbReference type="InterPro" id="IPR022663">
    <property type="entry name" value="DapB_C"/>
</dbReference>
<dbReference type="InterPro" id="IPR000846">
    <property type="entry name" value="DapB_N"/>
</dbReference>
<dbReference type="InterPro" id="IPR023940">
    <property type="entry name" value="DHDPR_bac"/>
</dbReference>
<dbReference type="InterPro" id="IPR036291">
    <property type="entry name" value="NAD(P)-bd_dom_sf"/>
</dbReference>
<dbReference type="NCBIfam" id="TIGR00036">
    <property type="entry name" value="dapB"/>
    <property type="match status" value="1"/>
</dbReference>
<dbReference type="PANTHER" id="PTHR20836:SF0">
    <property type="entry name" value="4-HYDROXY-TETRAHYDRODIPICOLINATE REDUCTASE 1, CHLOROPLASTIC-RELATED"/>
    <property type="match status" value="1"/>
</dbReference>
<dbReference type="PANTHER" id="PTHR20836">
    <property type="entry name" value="DIHYDRODIPICOLINATE REDUCTASE"/>
    <property type="match status" value="1"/>
</dbReference>
<dbReference type="Pfam" id="PF05173">
    <property type="entry name" value="DapB_C"/>
    <property type="match status" value="1"/>
</dbReference>
<dbReference type="Pfam" id="PF01113">
    <property type="entry name" value="DapB_N"/>
    <property type="match status" value="1"/>
</dbReference>
<dbReference type="PIRSF" id="PIRSF000161">
    <property type="entry name" value="DHPR"/>
    <property type="match status" value="1"/>
</dbReference>
<dbReference type="SUPFAM" id="SSF55347">
    <property type="entry name" value="Glyceraldehyde-3-phosphate dehydrogenase-like, C-terminal domain"/>
    <property type="match status" value="1"/>
</dbReference>
<dbReference type="SUPFAM" id="SSF51735">
    <property type="entry name" value="NAD(P)-binding Rossmann-fold domains"/>
    <property type="match status" value="1"/>
</dbReference>
<accession>B8J0P9</accession>
<name>DAPB_DESDA</name>
<gene>
    <name evidence="1" type="primary">dapB</name>
    <name type="ordered locus">Ddes_1424</name>
</gene>
<proteinExistence type="inferred from homology"/>
<comment type="function">
    <text evidence="1">Catalyzes the conversion of 4-hydroxy-tetrahydrodipicolinate (HTPA) to tetrahydrodipicolinate.</text>
</comment>
<comment type="catalytic activity">
    <reaction evidence="1">
        <text>(S)-2,3,4,5-tetrahydrodipicolinate + NAD(+) + H2O = (2S,4S)-4-hydroxy-2,3,4,5-tetrahydrodipicolinate + NADH + H(+)</text>
        <dbReference type="Rhea" id="RHEA:35323"/>
        <dbReference type="ChEBI" id="CHEBI:15377"/>
        <dbReference type="ChEBI" id="CHEBI:15378"/>
        <dbReference type="ChEBI" id="CHEBI:16845"/>
        <dbReference type="ChEBI" id="CHEBI:57540"/>
        <dbReference type="ChEBI" id="CHEBI:57945"/>
        <dbReference type="ChEBI" id="CHEBI:67139"/>
        <dbReference type="EC" id="1.17.1.8"/>
    </reaction>
</comment>
<comment type="catalytic activity">
    <reaction evidence="1">
        <text>(S)-2,3,4,5-tetrahydrodipicolinate + NADP(+) + H2O = (2S,4S)-4-hydroxy-2,3,4,5-tetrahydrodipicolinate + NADPH + H(+)</text>
        <dbReference type="Rhea" id="RHEA:35331"/>
        <dbReference type="ChEBI" id="CHEBI:15377"/>
        <dbReference type="ChEBI" id="CHEBI:15378"/>
        <dbReference type="ChEBI" id="CHEBI:16845"/>
        <dbReference type="ChEBI" id="CHEBI:57783"/>
        <dbReference type="ChEBI" id="CHEBI:58349"/>
        <dbReference type="ChEBI" id="CHEBI:67139"/>
        <dbReference type="EC" id="1.17.1.8"/>
    </reaction>
</comment>
<comment type="pathway">
    <text evidence="1">Amino-acid biosynthesis; L-lysine biosynthesis via DAP pathway; (S)-tetrahydrodipicolinate from L-aspartate: step 4/4.</text>
</comment>
<comment type="subcellular location">
    <subcellularLocation>
        <location evidence="1">Cytoplasm</location>
    </subcellularLocation>
</comment>
<comment type="similarity">
    <text evidence="1">Belongs to the DapB family.</text>
</comment>
<comment type="caution">
    <text evidence="2">Was originally thought to be a dihydrodipicolinate reductase (DHDPR), catalyzing the conversion of dihydrodipicolinate to tetrahydrodipicolinate. However, it was shown in E.coli that the substrate of the enzymatic reaction is not dihydrodipicolinate (DHDP) but in fact (2S,4S)-4-hydroxy-2,3,4,5-tetrahydrodipicolinic acid (HTPA), the product released by the DapA-catalyzed reaction.</text>
</comment>
<reference key="1">
    <citation type="submission" date="2009-01" db="EMBL/GenBank/DDBJ databases">
        <title>Complete sequence of Desulfovibrio desulfuricans subsp. desulfuricans str. ATCC 27774.</title>
        <authorList>
            <consortium name="US DOE Joint Genome Institute"/>
            <person name="Lucas S."/>
            <person name="Copeland A."/>
            <person name="Lapidus A."/>
            <person name="Glavina del Rio T."/>
            <person name="Tice H."/>
            <person name="Bruce D."/>
            <person name="Goodwin L."/>
            <person name="Pitluck S."/>
            <person name="Sims D."/>
            <person name="Lu M."/>
            <person name="Kiss H."/>
            <person name="Meineke L."/>
            <person name="Brettin T."/>
            <person name="Detter J.C."/>
            <person name="Han C."/>
            <person name="Larimer F."/>
            <person name="Land M."/>
            <person name="Hauser L."/>
            <person name="Kyrpides N."/>
            <person name="Ovchinnikova G."/>
            <person name="Hazen T.C."/>
        </authorList>
    </citation>
    <scope>NUCLEOTIDE SEQUENCE [LARGE SCALE GENOMIC DNA]</scope>
    <source>
        <strain>ATCC 27774 / DSM 6949 / MB</strain>
    </source>
</reference>
<evidence type="ECO:0000255" key="1">
    <source>
        <dbReference type="HAMAP-Rule" id="MF_00102"/>
    </source>
</evidence>
<evidence type="ECO:0000305" key="2"/>
<keyword id="KW-0028">Amino-acid biosynthesis</keyword>
<keyword id="KW-0963">Cytoplasm</keyword>
<keyword id="KW-0220">Diaminopimelate biosynthesis</keyword>
<keyword id="KW-0457">Lysine biosynthesis</keyword>
<keyword id="KW-0520">NAD</keyword>
<keyword id="KW-0521">NADP</keyword>
<keyword id="KW-0560">Oxidoreductase</keyword>
<protein>
    <recommendedName>
        <fullName evidence="1">4-hydroxy-tetrahydrodipicolinate reductase</fullName>
        <shortName evidence="1">HTPA reductase</shortName>
        <ecNumber evidence="1">1.17.1.8</ecNumber>
    </recommendedName>
</protein>
<feature type="chain" id="PRO_1000118851" description="4-hydroxy-tetrahydrodipicolinate reductase">
    <location>
        <begin position="1"/>
        <end position="259"/>
    </location>
</feature>
<feature type="active site" description="Proton donor/acceptor" evidence="1">
    <location>
        <position position="149"/>
    </location>
</feature>
<feature type="active site" description="Proton donor" evidence="1">
    <location>
        <position position="153"/>
    </location>
</feature>
<feature type="binding site" evidence="1">
    <location>
        <begin position="9"/>
        <end position="14"/>
    </location>
    <ligand>
        <name>NAD(+)</name>
        <dbReference type="ChEBI" id="CHEBI:57540"/>
    </ligand>
</feature>
<feature type="binding site" evidence="1">
    <location>
        <position position="37"/>
    </location>
    <ligand>
        <name>NADP(+)</name>
        <dbReference type="ChEBI" id="CHEBI:58349"/>
    </ligand>
</feature>
<feature type="binding site" evidence="1">
    <location>
        <begin position="92"/>
        <end position="94"/>
    </location>
    <ligand>
        <name>NAD(+)</name>
        <dbReference type="ChEBI" id="CHEBI:57540"/>
    </ligand>
</feature>
<feature type="binding site" evidence="1">
    <location>
        <begin position="116"/>
        <end position="119"/>
    </location>
    <ligand>
        <name>NAD(+)</name>
        <dbReference type="ChEBI" id="CHEBI:57540"/>
    </ligand>
</feature>
<feature type="binding site" evidence="1">
    <location>
        <position position="150"/>
    </location>
    <ligand>
        <name>(S)-2,3,4,5-tetrahydrodipicolinate</name>
        <dbReference type="ChEBI" id="CHEBI:16845"/>
    </ligand>
</feature>
<feature type="binding site" evidence="1">
    <location>
        <begin position="159"/>
        <end position="160"/>
    </location>
    <ligand>
        <name>(S)-2,3,4,5-tetrahydrodipicolinate</name>
        <dbReference type="ChEBI" id="CHEBI:16845"/>
    </ligand>
</feature>